<protein>
    <recommendedName>
        <fullName>Kinesin-like protein KIF13A</fullName>
    </recommendedName>
</protein>
<proteinExistence type="evidence at protein level"/>
<comment type="function">
    <text evidence="1 6">Plus end-directed microtubule-dependent motor protein involved in intracellular transport and regulating various processes such as mannose-6-phosphate receptor (M6PR) transport to the plasma membrane, endosomal sorting during melanosome biogenesis and cytokinesis. During melanosome maturation, required for delivering melanogenic enzymes from recycling endosomes to nascent melanosomes by creating peripheral recycling endosomal subdomains in melanocytes. Also required for the abscission step in cytokinesis: mediates translocation of ZFYVE26, and possibly TTC19, to the midbody during cytokinesis (By similarity). Mediates the transport of M6PR-containing vesicles from trans-Golgi network to the plasma membrane via direct interaction with the AP-1 complex.</text>
</comment>
<comment type="subunit">
    <text evidence="1 6">Interacts with AP1G1 and AP1G2. Interacts with ZFYVE26 (By similarity). Interacts with AP2B1.</text>
</comment>
<comment type="subcellular location">
    <subcellularLocation>
        <location evidence="6">Golgi apparatus membrane</location>
    </subcellularLocation>
    <subcellularLocation>
        <location evidence="9">Cytoplasm</location>
        <location evidence="9">Cytoskeleton</location>
        <location evidence="9">Microtubule organizing center</location>
        <location evidence="9">Centrosome</location>
    </subcellularLocation>
    <subcellularLocation>
        <location evidence="1">Midbody</location>
    </subcellularLocation>
    <subcellularLocation>
        <location evidence="1">Endosome membrane</location>
    </subcellularLocation>
    <text evidence="1">Recruited to the midbody during cytokinesis.</text>
</comment>
<comment type="developmental stage">
    <text evidence="7">At 9.5 dpc, expressed essentially in the central nervous system. Widely expressed at 10.5 dpc. At 11.5 dpc, expressed in the telencephaon, otic vesicles, limb buds, nasal processes and urogenital bud.</text>
</comment>
<comment type="similarity">
    <text evidence="4">Belongs to the TRAFAC class myosin-kinesin ATPase superfamily. Kinesin family.</text>
</comment>
<dbReference type="EMBL" id="AB037923">
    <property type="protein sequence ID" value="BAB16346.1"/>
    <property type="molecule type" value="mRNA"/>
</dbReference>
<dbReference type="EMBL" id="AB001429">
    <property type="protein sequence ID" value="BAA22389.1"/>
    <property type="molecule type" value="mRNA"/>
</dbReference>
<dbReference type="CCDS" id="CCDS36652.1"/>
<dbReference type="PDB" id="5DJO">
    <property type="method" value="X-ray"/>
    <property type="resolution" value="1.74 A"/>
    <property type="chains" value="A/B=390-555"/>
</dbReference>
<dbReference type="PDBsum" id="5DJO"/>
<dbReference type="SMR" id="Q9EQW7"/>
<dbReference type="FunCoup" id="Q9EQW7">
    <property type="interactions" value="355"/>
</dbReference>
<dbReference type="STRING" id="10090.ENSMUSP00000055304"/>
<dbReference type="iPTMnet" id="Q9EQW7"/>
<dbReference type="PhosphoSitePlus" id="Q9EQW7"/>
<dbReference type="SwissPalm" id="Q9EQW7"/>
<dbReference type="jPOST" id="Q9EQW7"/>
<dbReference type="PaxDb" id="10090-ENSMUSP00000055304"/>
<dbReference type="PeptideAtlas" id="Q9EQW7"/>
<dbReference type="ProteomicsDB" id="263598"/>
<dbReference type="Pumba" id="Q9EQW7"/>
<dbReference type="AGR" id="MGI:1098264"/>
<dbReference type="MGI" id="MGI:1098264">
    <property type="gene designation" value="Kif13a"/>
</dbReference>
<dbReference type="eggNOG" id="KOG0241">
    <property type="taxonomic scope" value="Eukaryota"/>
</dbReference>
<dbReference type="InParanoid" id="Q9EQW7"/>
<dbReference type="OrthoDB" id="3176171at2759"/>
<dbReference type="PhylomeDB" id="Q9EQW7"/>
<dbReference type="ChiTaRS" id="Kif13a">
    <property type="organism name" value="mouse"/>
</dbReference>
<dbReference type="EvolutionaryTrace" id="Q9EQW7"/>
<dbReference type="PRO" id="PR:Q9EQW7"/>
<dbReference type="Proteomes" id="UP000000589">
    <property type="component" value="Unplaced"/>
</dbReference>
<dbReference type="RNAct" id="Q9EQW7">
    <property type="molecule type" value="protein"/>
</dbReference>
<dbReference type="GO" id="GO:0005813">
    <property type="term" value="C:centrosome"/>
    <property type="evidence" value="ECO:0000250"/>
    <property type="project" value="UniProtKB"/>
</dbReference>
<dbReference type="GO" id="GO:0010008">
    <property type="term" value="C:endosome membrane"/>
    <property type="evidence" value="ECO:0000250"/>
    <property type="project" value="UniProtKB"/>
</dbReference>
<dbReference type="GO" id="GO:0000139">
    <property type="term" value="C:Golgi membrane"/>
    <property type="evidence" value="ECO:0007669"/>
    <property type="project" value="UniProtKB-SubCell"/>
</dbReference>
<dbReference type="GO" id="GO:0005874">
    <property type="term" value="C:microtubule"/>
    <property type="evidence" value="ECO:0007669"/>
    <property type="project" value="UniProtKB-KW"/>
</dbReference>
<dbReference type="GO" id="GO:0030496">
    <property type="term" value="C:midbody"/>
    <property type="evidence" value="ECO:0000250"/>
    <property type="project" value="UniProtKB"/>
</dbReference>
<dbReference type="GO" id="GO:0032588">
    <property type="term" value="C:trans-Golgi network membrane"/>
    <property type="evidence" value="ECO:0000314"/>
    <property type="project" value="UniProtKB"/>
</dbReference>
<dbReference type="GO" id="GO:0005524">
    <property type="term" value="F:ATP binding"/>
    <property type="evidence" value="ECO:0007669"/>
    <property type="project" value="UniProtKB-KW"/>
</dbReference>
<dbReference type="GO" id="GO:0008017">
    <property type="term" value="F:microtubule binding"/>
    <property type="evidence" value="ECO:0007669"/>
    <property type="project" value="InterPro"/>
</dbReference>
<dbReference type="GO" id="GO:0003777">
    <property type="term" value="F:microtubule motor activity"/>
    <property type="evidence" value="ECO:0000314"/>
    <property type="project" value="UniProtKB"/>
</dbReference>
<dbReference type="GO" id="GO:0051301">
    <property type="term" value="P:cell division"/>
    <property type="evidence" value="ECO:0007669"/>
    <property type="project" value="UniProtKB-KW"/>
</dbReference>
<dbReference type="GO" id="GO:0008333">
    <property type="term" value="P:endosome to lysosome transport"/>
    <property type="evidence" value="ECO:0000250"/>
    <property type="project" value="UniProtKB"/>
</dbReference>
<dbReference type="GO" id="GO:0043001">
    <property type="term" value="P:Golgi to plasma membrane protein transport"/>
    <property type="evidence" value="ECO:0000314"/>
    <property type="project" value="UniProtKB"/>
</dbReference>
<dbReference type="GO" id="GO:0006886">
    <property type="term" value="P:intracellular protein transport"/>
    <property type="evidence" value="ECO:0000250"/>
    <property type="project" value="UniProtKB"/>
</dbReference>
<dbReference type="GO" id="GO:0032438">
    <property type="term" value="P:melanosome organization"/>
    <property type="evidence" value="ECO:0000250"/>
    <property type="project" value="UniProtKB"/>
</dbReference>
<dbReference type="GO" id="GO:0072383">
    <property type="term" value="P:plus-end-directed vesicle transport along microtubule"/>
    <property type="evidence" value="ECO:0000314"/>
    <property type="project" value="UniProtKB"/>
</dbReference>
<dbReference type="GO" id="GO:0032465">
    <property type="term" value="P:regulation of cytokinesis"/>
    <property type="evidence" value="ECO:0000250"/>
    <property type="project" value="UniProtKB"/>
</dbReference>
<dbReference type="GO" id="GO:0035459">
    <property type="term" value="P:vesicle cargo loading"/>
    <property type="evidence" value="ECO:0000250"/>
    <property type="project" value="UniProtKB"/>
</dbReference>
<dbReference type="CDD" id="cd22729">
    <property type="entry name" value="FHA_KIF13A"/>
    <property type="match status" value="1"/>
</dbReference>
<dbReference type="CDD" id="cd01365">
    <property type="entry name" value="KISc_KIF1A_KIF1B"/>
    <property type="match status" value="1"/>
</dbReference>
<dbReference type="FunFam" id="2.60.200.20:FF:000002">
    <property type="entry name" value="Kinesin family member 13A"/>
    <property type="match status" value="1"/>
</dbReference>
<dbReference type="FunFam" id="3.40.850.10:FF:000010">
    <property type="entry name" value="Kinesin family member 13A"/>
    <property type="match status" value="1"/>
</dbReference>
<dbReference type="Gene3D" id="2.60.200.20">
    <property type="match status" value="1"/>
</dbReference>
<dbReference type="Gene3D" id="6.10.250.2520">
    <property type="match status" value="1"/>
</dbReference>
<dbReference type="Gene3D" id="3.40.850.10">
    <property type="entry name" value="Kinesin motor domain"/>
    <property type="match status" value="1"/>
</dbReference>
<dbReference type="InterPro" id="IPR000253">
    <property type="entry name" value="FHA_dom"/>
</dbReference>
<dbReference type="InterPro" id="IPR022164">
    <property type="entry name" value="Kinesin-like"/>
</dbReference>
<dbReference type="InterPro" id="IPR022140">
    <property type="entry name" value="Kinesin-like_KIF1-typ"/>
</dbReference>
<dbReference type="InterPro" id="IPR032405">
    <property type="entry name" value="Kinesin_assoc"/>
</dbReference>
<dbReference type="InterPro" id="IPR019821">
    <property type="entry name" value="Kinesin_motor_CS"/>
</dbReference>
<dbReference type="InterPro" id="IPR001752">
    <property type="entry name" value="Kinesin_motor_dom"/>
</dbReference>
<dbReference type="InterPro" id="IPR036961">
    <property type="entry name" value="Kinesin_motor_dom_sf"/>
</dbReference>
<dbReference type="InterPro" id="IPR027417">
    <property type="entry name" value="P-loop_NTPase"/>
</dbReference>
<dbReference type="InterPro" id="IPR008984">
    <property type="entry name" value="SMAD_FHA_dom_sf"/>
</dbReference>
<dbReference type="PANTHER" id="PTHR47117">
    <property type="entry name" value="STAR-RELATED LIPID TRANSFER PROTEIN 9"/>
    <property type="match status" value="1"/>
</dbReference>
<dbReference type="Pfam" id="PF12473">
    <property type="entry name" value="DUF3694"/>
    <property type="match status" value="1"/>
</dbReference>
<dbReference type="Pfam" id="PF00498">
    <property type="entry name" value="FHA"/>
    <property type="match status" value="1"/>
</dbReference>
<dbReference type="Pfam" id="PF12423">
    <property type="entry name" value="KIF1B"/>
    <property type="match status" value="1"/>
</dbReference>
<dbReference type="Pfam" id="PF00225">
    <property type="entry name" value="Kinesin"/>
    <property type="match status" value="1"/>
</dbReference>
<dbReference type="Pfam" id="PF16183">
    <property type="entry name" value="Kinesin_assoc"/>
    <property type="match status" value="1"/>
</dbReference>
<dbReference type="PRINTS" id="PR00380">
    <property type="entry name" value="KINESINHEAVY"/>
</dbReference>
<dbReference type="SMART" id="SM00129">
    <property type="entry name" value="KISc"/>
    <property type="match status" value="1"/>
</dbReference>
<dbReference type="SUPFAM" id="SSF52540">
    <property type="entry name" value="P-loop containing nucleoside triphosphate hydrolases"/>
    <property type="match status" value="1"/>
</dbReference>
<dbReference type="SUPFAM" id="SSF49879">
    <property type="entry name" value="SMAD/FHA domain"/>
    <property type="match status" value="1"/>
</dbReference>
<dbReference type="PROSITE" id="PS00411">
    <property type="entry name" value="KINESIN_MOTOR_1"/>
    <property type="match status" value="1"/>
</dbReference>
<dbReference type="PROSITE" id="PS50067">
    <property type="entry name" value="KINESIN_MOTOR_2"/>
    <property type="match status" value="1"/>
</dbReference>
<reference key="1">
    <citation type="journal article" date="2000" name="Cell">
        <title>A novel motor, KIF13A, transports mannose-6-phosphate receptor to plasma membrane through direct interaction with AP-1 complex.</title>
        <authorList>
            <person name="Nakagawa T."/>
            <person name="Setou M."/>
            <person name="Seog D.H."/>
            <person name="Ogasawara K."/>
            <person name="Dohmae N."/>
            <person name="Takio K."/>
            <person name="Hirokawa N."/>
        </authorList>
    </citation>
    <scope>NUCLEOTIDE SEQUENCE [MRNA]</scope>
    <scope>FUNCTION</scope>
    <scope>SUBCELLULAR LOCATION</scope>
    <scope>INTERACTION WITH AP2B1</scope>
    <source>
        <strain>ICR</strain>
        <tissue>Brain</tissue>
    </source>
</reference>
<reference key="2">
    <citation type="journal article" date="1997" name="Proc. Natl. Acad. Sci. U.S.A.">
        <title>Identification and classification of 16 new kinesin superfamily (KIF) proteins in mouse genome.</title>
        <authorList>
            <person name="Nakagawa T."/>
            <person name="Tanaka Y."/>
            <person name="Matsuoka E."/>
            <person name="Kondo S."/>
            <person name="Okada Y."/>
            <person name="Noda Y."/>
            <person name="Kanai Y."/>
            <person name="Hirokawa N."/>
        </authorList>
    </citation>
    <scope>NUCLEOTIDE SEQUENCE [MRNA] OF 98-257</scope>
    <source>
        <strain>ICR</strain>
    </source>
</reference>
<reference key="3">
    <citation type="journal article" date="2001" name="Genomics">
        <title>Identification of the human KIF13A gene homologous to Drosophila kinesin-73 and candidate for schizophrenia.</title>
        <authorList>
            <person name="Jamain S."/>
            <person name="Quach H."/>
            <person name="Fellous M."/>
            <person name="Bourgeron T."/>
        </authorList>
    </citation>
    <scope>DEVELOPMENTAL STAGE</scope>
</reference>
<reference key="4">
    <citation type="journal article" date="2007" name="Proc. Natl. Acad. Sci. U.S.A.">
        <title>Large-scale phosphorylation analysis of mouse liver.</title>
        <authorList>
            <person name="Villen J."/>
            <person name="Beausoleil S.A."/>
            <person name="Gerber S.A."/>
            <person name="Gygi S.P."/>
        </authorList>
    </citation>
    <scope>IDENTIFICATION BY MASS SPECTROMETRY [LARGE SCALE ANALYSIS]</scope>
    <source>
        <tissue>Liver</tissue>
    </source>
</reference>
<reference key="5">
    <citation type="journal article" date="2010" name="Cell">
        <title>A tissue-specific atlas of mouse protein phosphorylation and expression.</title>
        <authorList>
            <person name="Huttlin E.L."/>
            <person name="Jedrychowski M.P."/>
            <person name="Elias J.E."/>
            <person name="Goswami T."/>
            <person name="Rad R."/>
            <person name="Beausoleil S.A."/>
            <person name="Villen J."/>
            <person name="Haas W."/>
            <person name="Sowa M.E."/>
            <person name="Gygi S.P."/>
        </authorList>
    </citation>
    <scope>PHOSPHORYLATION [LARGE SCALE ANALYSIS] AT SER-1477; SER-1481 AND SER-1600</scope>
    <scope>IDENTIFICATION BY MASS SPECTROMETRY [LARGE SCALE ANALYSIS]</scope>
    <source>
        <tissue>Brown adipose tissue</tissue>
        <tissue>Heart</tissue>
        <tissue>Kidney</tissue>
        <tissue>Lung</tissue>
        <tissue>Pancreas</tissue>
        <tissue>Spleen</tissue>
    </source>
</reference>
<feature type="chain" id="PRO_0000125447" description="Kinesin-like protein KIF13A">
    <location>
        <begin position="1"/>
        <end position="1749"/>
    </location>
</feature>
<feature type="domain" description="Kinesin motor" evidence="4">
    <location>
        <begin position="5"/>
        <end position="352"/>
    </location>
</feature>
<feature type="domain" description="FHA">
    <location>
        <begin position="469"/>
        <end position="519"/>
    </location>
</feature>
<feature type="region of interest" description="Disordered" evidence="5">
    <location>
        <begin position="633"/>
        <end position="652"/>
    </location>
</feature>
<feature type="region of interest" description="Disordered" evidence="5">
    <location>
        <begin position="834"/>
        <end position="853"/>
    </location>
</feature>
<feature type="region of interest" description="Disordered" evidence="5">
    <location>
        <begin position="1370"/>
        <end position="1402"/>
    </location>
</feature>
<feature type="region of interest" description="Disordered" evidence="5">
    <location>
        <begin position="1417"/>
        <end position="1436"/>
    </location>
</feature>
<feature type="region of interest" description="Disordered" evidence="5">
    <location>
        <begin position="1584"/>
        <end position="1665"/>
    </location>
</feature>
<feature type="region of interest" description="Disordered" evidence="5">
    <location>
        <begin position="1698"/>
        <end position="1749"/>
    </location>
</feature>
<feature type="coiled-coil region" evidence="3">
    <location>
        <begin position="359"/>
        <end position="431"/>
    </location>
</feature>
<feature type="coiled-coil region" evidence="3">
    <location>
        <begin position="552"/>
        <end position="775"/>
    </location>
</feature>
<feature type="coiled-coil region" evidence="3">
    <location>
        <begin position="1086"/>
        <end position="1126"/>
    </location>
</feature>
<feature type="coiled-coil region" evidence="3">
    <location>
        <begin position="1475"/>
        <end position="1499"/>
    </location>
</feature>
<feature type="compositionally biased region" description="Polar residues" evidence="5">
    <location>
        <begin position="1370"/>
        <end position="1383"/>
    </location>
</feature>
<feature type="compositionally biased region" description="Basic and acidic residues" evidence="5">
    <location>
        <begin position="1421"/>
        <end position="1430"/>
    </location>
</feature>
<feature type="compositionally biased region" description="Basic and acidic residues" evidence="5">
    <location>
        <begin position="1719"/>
        <end position="1741"/>
    </location>
</feature>
<feature type="binding site" evidence="4">
    <location>
        <begin position="102"/>
        <end position="109"/>
    </location>
    <ligand>
        <name>ATP</name>
        <dbReference type="ChEBI" id="CHEBI:30616"/>
    </ligand>
</feature>
<feature type="modified residue" description="Phosphoserine" evidence="2">
    <location>
        <position position="636"/>
    </location>
</feature>
<feature type="modified residue" description="Phosphoserine" evidence="2">
    <location>
        <position position="1274"/>
    </location>
</feature>
<feature type="modified residue" description="Phosphoserine" evidence="2">
    <location>
        <position position="1441"/>
    </location>
</feature>
<feature type="modified residue" description="Phosphoserine" evidence="10">
    <location>
        <position position="1477"/>
    </location>
</feature>
<feature type="modified residue" description="Phosphoserine" evidence="10">
    <location>
        <position position="1481"/>
    </location>
</feature>
<feature type="modified residue" description="Phosphoserine" evidence="2">
    <location>
        <position position="1524"/>
    </location>
</feature>
<feature type="modified residue" description="Phosphoserine" evidence="10">
    <location>
        <position position="1600"/>
    </location>
</feature>
<feature type="modified residue" description="Phosphoserine" evidence="2">
    <location>
        <position position="1650"/>
    </location>
</feature>
<feature type="sequence conflict" description="In Ref. 2; BAA22389." evidence="8" ref="2">
    <original>A</original>
    <variation>T</variation>
    <location>
        <position position="100"/>
    </location>
</feature>
<feature type="sequence conflict" description="In Ref. 2; BAA22389." evidence="8" ref="2">
    <original>V</original>
    <variation>A</variation>
    <location>
        <position position="157"/>
    </location>
</feature>
<feature type="helix" evidence="11">
    <location>
        <begin position="389"/>
        <end position="431"/>
    </location>
</feature>
<feature type="strand" evidence="11">
    <location>
        <begin position="433"/>
        <end position="436"/>
    </location>
</feature>
<feature type="strand" evidence="11">
    <location>
        <begin position="439"/>
        <end position="442"/>
    </location>
</feature>
<feature type="strand" evidence="11">
    <location>
        <begin position="448"/>
        <end position="451"/>
    </location>
</feature>
<feature type="strand" evidence="11">
    <location>
        <begin position="458"/>
        <end position="460"/>
    </location>
</feature>
<feature type="strand" evidence="11">
    <location>
        <begin position="462"/>
        <end position="465"/>
    </location>
</feature>
<feature type="strand" evidence="11">
    <location>
        <begin position="468"/>
        <end position="475"/>
    </location>
</feature>
<feature type="strand" evidence="11">
    <location>
        <begin position="478"/>
        <end position="481"/>
    </location>
</feature>
<feature type="strand" evidence="11">
    <location>
        <begin position="492"/>
        <end position="496"/>
    </location>
</feature>
<feature type="strand" evidence="11">
    <location>
        <begin position="502"/>
        <end position="506"/>
    </location>
</feature>
<feature type="strand" evidence="11">
    <location>
        <begin position="512"/>
        <end position="514"/>
    </location>
</feature>
<feature type="strand" evidence="11">
    <location>
        <begin position="530"/>
        <end position="533"/>
    </location>
</feature>
<feature type="turn" evidence="11">
    <location>
        <begin position="534"/>
        <end position="536"/>
    </location>
</feature>
<feature type="strand" evidence="11">
    <location>
        <begin position="537"/>
        <end position="542"/>
    </location>
</feature>
<name>KI13A_MOUSE</name>
<evidence type="ECO:0000250" key="1"/>
<evidence type="ECO:0000250" key="2">
    <source>
        <dbReference type="UniProtKB" id="Q9H1H9"/>
    </source>
</evidence>
<evidence type="ECO:0000255" key="3"/>
<evidence type="ECO:0000255" key="4">
    <source>
        <dbReference type="PROSITE-ProRule" id="PRU00283"/>
    </source>
</evidence>
<evidence type="ECO:0000256" key="5">
    <source>
        <dbReference type="SAM" id="MobiDB-lite"/>
    </source>
</evidence>
<evidence type="ECO:0000269" key="6">
    <source>
    </source>
</evidence>
<evidence type="ECO:0000269" key="7">
    <source>
    </source>
</evidence>
<evidence type="ECO:0000305" key="8"/>
<evidence type="ECO:0000305" key="9">
    <source>
    </source>
</evidence>
<evidence type="ECO:0007744" key="10">
    <source>
    </source>
</evidence>
<evidence type="ECO:0007829" key="11">
    <source>
        <dbReference type="PDB" id="5DJO"/>
    </source>
</evidence>
<accession>Q9EQW7</accession>
<accession>O35062</accession>
<organism>
    <name type="scientific">Mus musculus</name>
    <name type="common">Mouse</name>
    <dbReference type="NCBI Taxonomy" id="10090"/>
    <lineage>
        <taxon>Eukaryota</taxon>
        <taxon>Metazoa</taxon>
        <taxon>Chordata</taxon>
        <taxon>Craniata</taxon>
        <taxon>Vertebrata</taxon>
        <taxon>Euteleostomi</taxon>
        <taxon>Mammalia</taxon>
        <taxon>Eutheria</taxon>
        <taxon>Euarchontoglires</taxon>
        <taxon>Glires</taxon>
        <taxon>Rodentia</taxon>
        <taxon>Myomorpha</taxon>
        <taxon>Muroidea</taxon>
        <taxon>Muridae</taxon>
        <taxon>Murinae</taxon>
        <taxon>Mus</taxon>
        <taxon>Mus</taxon>
    </lineage>
</organism>
<keyword id="KW-0002">3D-structure</keyword>
<keyword id="KW-0067">ATP-binding</keyword>
<keyword id="KW-0131">Cell cycle</keyword>
<keyword id="KW-0132">Cell division</keyword>
<keyword id="KW-0175">Coiled coil</keyword>
<keyword id="KW-0963">Cytoplasm</keyword>
<keyword id="KW-0206">Cytoskeleton</keyword>
<keyword id="KW-0967">Endosome</keyword>
<keyword id="KW-0333">Golgi apparatus</keyword>
<keyword id="KW-0472">Membrane</keyword>
<keyword id="KW-0493">Microtubule</keyword>
<keyword id="KW-0505">Motor protein</keyword>
<keyword id="KW-0547">Nucleotide-binding</keyword>
<keyword id="KW-0597">Phosphoprotein</keyword>
<keyword id="KW-0653">Protein transport</keyword>
<keyword id="KW-1185">Reference proteome</keyword>
<keyword id="KW-0813">Transport</keyword>
<gene>
    <name type="primary">Kif13a</name>
</gene>
<sequence length="1749" mass="195813">MSDTKVKVAVRVRPMNRRELELNTKCVVEMEGNQTVLHPPPSNTKQGERKPPKVFAFDYCFWSMDESNTTKYAGQEVVFKCLGEGILEKAFQGYNACIFAYGQTGSGKSFSMMGHAEQLGLIPRLCCALFQRIALEQNESQTFKVEVSYMEIYNEKVRDLLDPKGSRQSLKVREHKVLGPYVDGLSQLAVTSFEDIESLMSEGNKSRTVAATNMNEESSRSHAVFNIIITQTLYDLQSGNSGEKVSKVSLVDLAGSERVSKTGAAGERLKEGSNINKSLTTLGLVISSLADQAAGKGKNKFVPYRDSVLTWLLKDNLGGNSQTSMIATISPAADNYEETLSTLRYADRAKRIVNHAVVNEDPNAKVIRELREEVEKLREQLSKAEAMKPPELKEKLEESEKLIKELTVTWEEKLRKTEAIAQERQRQLESMGISLETSGIKVGDDKCYLVNLNADPALNELLVYYLKDHTRVGADTSQDIQLFGIGIQPEHCEIDIAADGDITLTPKENARSCVNGTLVCNTTQLWHGDRILWGNNHFFRINLPKRKRRDWLKDFERETSSAEHDLDAASEASSEPDYNYEFAQMEVIMKTLNSNDPVQNVVQVLEKQYLEEKRTALEEQRLMYERELEQLRQQLSPERQPPSSASDRLAYSSQTAQQKVTQWAEERDELFRQSLAKLREQLVKANTLVREANFLAEEMSKLTDYQVTLQIPAANLSANRKRGAIVSEPAIQARRKGKGTQVWTIEKLENKLIDMRDLYQEWKENVPEAKRLYGKRGDPFYEAQENHNLIGVANVFLECLFCDVKLQYAVPIISQQGEVAGRLHVEVTRITGTIPERMAEDDSSENSSESGSLEVVDSSGEVIHRVKKLTCRVIIKEATGLPISLSNFVFCQYTFWDQCESTVAAPVVDPDVPSPQSKDAQYTVTFSHCKDYVVTVTEEFLEFISDGALAIEVWGHRCAGNGSPIWEVDSLHAKTRTLHDRWNEVTRRIEVWISILELNELGDYAAVELHQAKDVNTGGVFQLRQGHSRRVQVTVKPVQHSGTLPLMVEAILSVSIGCVTARSTKLQRGLDSYQEEDLNCVRERWSDALIKRREYLDEQIKKVSNKKEKTEDDMEREARLVEQWVGLTEERNAVLVPAPGSGIPGAPADWVPPPGMETHIPVLFLDLNADDLSANEQLVGPHASGVNSILPKEHGSQFFYLPIIKHSDDEVSATASWDSSVHDSLHLNRVTPQNERIYLIVKTTVQLSHPAAMELVLRKRIAANIYNKQSFTQSLKRRISLINICYSCGVTYEIVSNIPKATEEIEDRETLALLAARSENEGTLDGETYIEKYTRGVLQVENILSLERLRQAVTVKEALSTKARHIRRSLSTPNVHNVSSSRPDLSGFDEDDKGWPENQLDVSDYSSSYQDVACYGTLPRDSPRRSKEGCPSENPHALTVSPFKAFSPQPPKFFKPLMPVKEEHKKRLALEARPLLSQEDSEEEENELEALSRKLMLTQPYVPVEFADFSVYNASLENREWSSSKADLTDSRALEKAVSRSPTTSSLTSGYFSHSASNATLSDMAVPSSDSSDQLAVSTKEVECAEPPGPSLAPDVRRASNQELTEVGRGSGKDETIAVPLEENSALPKGTPSPQSIPEESSRMPCRTASCSELDVGPSKDGHQAREFCPGEVTIEHTTNILEDHSFTEFMGVSDGKDFDGLADCSVGEPSRRRALTNETDHKGIPERPPDADRLHPKIENDQEATATR</sequence>